<reference key="1">
    <citation type="journal article" date="2004" name="Proc. Natl. Acad. Sci. U.S.A.">
        <title>Hematopoietic gene expression profile in zebrafish kidney marrow.</title>
        <authorList>
            <person name="Song H.-D."/>
            <person name="Sun X.-J."/>
            <person name="Deng M."/>
            <person name="Zhang G.-W."/>
            <person name="Zhou Y."/>
            <person name="Wu X.-Y."/>
            <person name="Sheng Y."/>
            <person name="Chen Y."/>
            <person name="Ruan Z."/>
            <person name="Jiang C.-L."/>
            <person name="Fan H.-Y."/>
            <person name="Zon L.I."/>
            <person name="Kanki J.P."/>
            <person name="Liu T.X."/>
            <person name="Look A.T."/>
            <person name="Chen Z."/>
        </authorList>
    </citation>
    <scope>NUCLEOTIDE SEQUENCE [LARGE SCALE MRNA]</scope>
    <source>
        <tissue>Kidney marrow</tissue>
    </source>
</reference>
<reference key="2">
    <citation type="submission" date="2003-01" db="EMBL/GenBank/DDBJ databases">
        <authorList>
            <consortium name="NIH - Zebrafish Gene Collection (ZGC) project"/>
        </authorList>
    </citation>
    <scope>NUCLEOTIDE SEQUENCE [LARGE SCALE MRNA]</scope>
    <source>
        <strain>AB</strain>
        <tissue>Embryo</tissue>
    </source>
</reference>
<reference key="3">
    <citation type="submission" date="1999-10" db="EMBL/GenBank/DDBJ databases">
        <title>Identification of a homologue of the murine RING1b gene in zebrafish.</title>
        <authorList>
            <person name="Murray B.W."/>
            <person name="Sueltmann H."/>
            <person name="Klein J."/>
        </authorList>
    </citation>
    <scope>NUCLEOTIDE SEQUENCE [MRNA] OF 1-259</scope>
</reference>
<dbReference type="EC" id="2.3.2.27" evidence="1"/>
<dbReference type="EMBL" id="AY576996">
    <property type="protein sequence ID" value="AAS92634.1"/>
    <property type="status" value="ALT_INIT"/>
    <property type="molecule type" value="mRNA"/>
</dbReference>
<dbReference type="EMBL" id="BC044472">
    <property type="protein sequence ID" value="AAH44472.1"/>
    <property type="molecule type" value="mRNA"/>
</dbReference>
<dbReference type="EMBL" id="AF196346">
    <property type="protein sequence ID" value="AAF17506.1"/>
    <property type="molecule type" value="mRNA"/>
</dbReference>
<dbReference type="SMR" id="Q803I4"/>
<dbReference type="BioGRID" id="84269">
    <property type="interactions" value="4"/>
</dbReference>
<dbReference type="FunCoup" id="Q803I4">
    <property type="interactions" value="1891"/>
</dbReference>
<dbReference type="STRING" id="7955.ENSDARP00000002609"/>
<dbReference type="PaxDb" id="7955-ENSDARP00000002609"/>
<dbReference type="Ensembl" id="ENSDART00000187760">
    <property type="protein sequence ID" value="ENSDARP00000149390"/>
    <property type="gene ID" value="ENSDARG00000010381"/>
</dbReference>
<dbReference type="AGR" id="ZFIN:ZDB-GENE-030131-5243"/>
<dbReference type="ZFIN" id="ZDB-GENE-030131-5243">
    <property type="gene designation" value="rnf2"/>
</dbReference>
<dbReference type="eggNOG" id="KOG0311">
    <property type="taxonomic scope" value="Eukaryota"/>
</dbReference>
<dbReference type="HOGENOM" id="CLU_056557_1_1_1"/>
<dbReference type="InParanoid" id="Q803I4"/>
<dbReference type="OMA" id="WNVNKPL"/>
<dbReference type="PhylomeDB" id="Q803I4"/>
<dbReference type="TreeFam" id="TF105501"/>
<dbReference type="Reactome" id="R-DRE-2559580">
    <property type="pathway name" value="Oxidative Stress Induced Senescence"/>
</dbReference>
<dbReference type="Reactome" id="R-DRE-3899300">
    <property type="pathway name" value="SUMOylation of transcription cofactors"/>
</dbReference>
<dbReference type="Reactome" id="R-DRE-4570464">
    <property type="pathway name" value="SUMOylation of RNA binding proteins"/>
</dbReference>
<dbReference type="UniPathway" id="UPA00143"/>
<dbReference type="PRO" id="PR:Q803I4"/>
<dbReference type="Proteomes" id="UP000000437">
    <property type="component" value="Unplaced"/>
</dbReference>
<dbReference type="Bgee" id="ENSDARG00000010381">
    <property type="expression patterns" value="Expressed in cleaving embryo and 36 other cell types or tissues"/>
</dbReference>
<dbReference type="ExpressionAtlas" id="Q803I4">
    <property type="expression patterns" value="baseline"/>
</dbReference>
<dbReference type="GO" id="GO:0005694">
    <property type="term" value="C:chromosome"/>
    <property type="evidence" value="ECO:0007669"/>
    <property type="project" value="UniProtKB-SubCell"/>
</dbReference>
<dbReference type="GO" id="GO:0005737">
    <property type="term" value="C:cytoplasm"/>
    <property type="evidence" value="ECO:0000250"/>
    <property type="project" value="UniProtKB"/>
</dbReference>
<dbReference type="GO" id="GO:0071339">
    <property type="term" value="C:MLL1 complex"/>
    <property type="evidence" value="ECO:0000250"/>
    <property type="project" value="UniProtKB"/>
</dbReference>
<dbReference type="GO" id="GO:0005634">
    <property type="term" value="C:nucleus"/>
    <property type="evidence" value="ECO:0000250"/>
    <property type="project" value="UniProtKB"/>
</dbReference>
<dbReference type="GO" id="GO:0031519">
    <property type="term" value="C:PcG protein complex"/>
    <property type="evidence" value="ECO:0000250"/>
    <property type="project" value="UniProtKB"/>
</dbReference>
<dbReference type="GO" id="GO:0035102">
    <property type="term" value="C:PRC1 complex"/>
    <property type="evidence" value="ECO:0000250"/>
    <property type="project" value="UniProtKB"/>
</dbReference>
<dbReference type="GO" id="GO:0000151">
    <property type="term" value="C:ubiquitin ligase complex"/>
    <property type="evidence" value="ECO:0000318"/>
    <property type="project" value="GO_Central"/>
</dbReference>
<dbReference type="GO" id="GO:0003682">
    <property type="term" value="F:chromatin binding"/>
    <property type="evidence" value="ECO:0000318"/>
    <property type="project" value="GO_Central"/>
</dbReference>
<dbReference type="GO" id="GO:0140862">
    <property type="term" value="F:histone H2AK119 ubiquitin ligase activity"/>
    <property type="evidence" value="ECO:0000250"/>
    <property type="project" value="UniProtKB"/>
</dbReference>
<dbReference type="GO" id="GO:0061630">
    <property type="term" value="F:ubiquitin protein ligase activity"/>
    <property type="evidence" value="ECO:0000250"/>
    <property type="project" value="UniProtKB"/>
</dbReference>
<dbReference type="GO" id="GO:0008270">
    <property type="term" value="F:zinc ion binding"/>
    <property type="evidence" value="ECO:0007669"/>
    <property type="project" value="UniProtKB-KW"/>
</dbReference>
<dbReference type="GO" id="GO:0003161">
    <property type="term" value="P:cardiac conduction system development"/>
    <property type="evidence" value="ECO:0000315"/>
    <property type="project" value="ZFIN"/>
</dbReference>
<dbReference type="GO" id="GO:0007417">
    <property type="term" value="P:central nervous system development"/>
    <property type="evidence" value="ECO:0000315"/>
    <property type="project" value="ZFIN"/>
</dbReference>
<dbReference type="GO" id="GO:0048701">
    <property type="term" value="P:embryonic cranial skeleton morphogenesis"/>
    <property type="evidence" value="ECO:0000315"/>
    <property type="project" value="ZFIN"/>
</dbReference>
<dbReference type="GO" id="GO:0048484">
    <property type="term" value="P:enteric nervous system development"/>
    <property type="evidence" value="ECO:0000315"/>
    <property type="project" value="ZFIN"/>
</dbReference>
<dbReference type="GO" id="GO:0040029">
    <property type="term" value="P:epigenetic regulation of gene expression"/>
    <property type="evidence" value="ECO:0000250"/>
    <property type="project" value="UniProtKB"/>
</dbReference>
<dbReference type="GO" id="GO:1902254">
    <property type="term" value="P:negative regulation of intrinsic apoptotic signaling pathway by p53 class mediator"/>
    <property type="evidence" value="ECO:0000315"/>
    <property type="project" value="ZFIN"/>
</dbReference>
<dbReference type="GO" id="GO:0000122">
    <property type="term" value="P:negative regulation of transcription by RNA polymerase II"/>
    <property type="evidence" value="ECO:0000250"/>
    <property type="project" value="UniProtKB"/>
</dbReference>
<dbReference type="GO" id="GO:0033339">
    <property type="term" value="P:pectoral fin development"/>
    <property type="evidence" value="ECO:0000315"/>
    <property type="project" value="ZFIN"/>
</dbReference>
<dbReference type="GO" id="GO:0016567">
    <property type="term" value="P:protein ubiquitination"/>
    <property type="evidence" value="ECO:0007669"/>
    <property type="project" value="UniProtKB-UniPathway"/>
</dbReference>
<dbReference type="GO" id="GO:1905304">
    <property type="term" value="P:regulation of cardiac myofibril assembly"/>
    <property type="evidence" value="ECO:0000315"/>
    <property type="project" value="ZFIN"/>
</dbReference>
<dbReference type="GO" id="GO:0032330">
    <property type="term" value="P:regulation of chondrocyte differentiation"/>
    <property type="evidence" value="ECO:0000315"/>
    <property type="project" value="ZFIN"/>
</dbReference>
<dbReference type="GO" id="GO:1905292">
    <property type="term" value="P:regulation of neural crest cell differentiation"/>
    <property type="evidence" value="ECO:0000315"/>
    <property type="project" value="ZFIN"/>
</dbReference>
<dbReference type="GO" id="GO:1905295">
    <property type="term" value="P:regulation of neural crest cell fate specification"/>
    <property type="evidence" value="ECO:0000315"/>
    <property type="project" value="ZFIN"/>
</dbReference>
<dbReference type="GO" id="GO:0060042">
    <property type="term" value="P:retina morphogenesis in camera-type eye"/>
    <property type="evidence" value="ECO:0000316"/>
    <property type="project" value="ZFIN"/>
</dbReference>
<dbReference type="CDD" id="cd17167">
    <property type="entry name" value="RAWUL_RING2"/>
    <property type="match status" value="1"/>
</dbReference>
<dbReference type="CDD" id="cd16740">
    <property type="entry name" value="RING-HC_RING2"/>
    <property type="match status" value="1"/>
</dbReference>
<dbReference type="FunFam" id="3.10.20.90:FF:000067">
    <property type="entry name" value="E3 ubiquitin-protein ligase RING2"/>
    <property type="match status" value="1"/>
</dbReference>
<dbReference type="FunFam" id="3.30.40.10:FF:000100">
    <property type="entry name" value="E3 ubiquitin-protein ligase RING2"/>
    <property type="match status" value="1"/>
</dbReference>
<dbReference type="Gene3D" id="3.10.20.90">
    <property type="entry name" value="Phosphatidylinositol 3-kinase Catalytic Subunit, Chain A, domain 1"/>
    <property type="match status" value="1"/>
</dbReference>
<dbReference type="Gene3D" id="3.30.40.10">
    <property type="entry name" value="Zinc/RING finger domain, C3HC4 (zinc finger)"/>
    <property type="match status" value="1"/>
</dbReference>
<dbReference type="InterPro" id="IPR032443">
    <property type="entry name" value="RAWUL"/>
</dbReference>
<dbReference type="InterPro" id="IPR043540">
    <property type="entry name" value="RING1/RING2"/>
</dbReference>
<dbReference type="InterPro" id="IPR037937">
    <property type="entry name" value="RING2_RAWUL_dom"/>
</dbReference>
<dbReference type="InterPro" id="IPR001841">
    <property type="entry name" value="Znf_RING"/>
</dbReference>
<dbReference type="InterPro" id="IPR013083">
    <property type="entry name" value="Znf_RING/FYVE/PHD"/>
</dbReference>
<dbReference type="InterPro" id="IPR017907">
    <property type="entry name" value="Znf_RING_CS"/>
</dbReference>
<dbReference type="PANTHER" id="PTHR46076">
    <property type="entry name" value="E3 UBIQUITIN-PROTEIN LIGASE RING1 / RING 2 FAMILY MEMBER"/>
    <property type="match status" value="1"/>
</dbReference>
<dbReference type="PANTHER" id="PTHR46076:SF4">
    <property type="entry name" value="E3 UBIQUITIN-PROTEIN LIGASE RING2"/>
    <property type="match status" value="1"/>
</dbReference>
<dbReference type="Pfam" id="PF16207">
    <property type="entry name" value="RAWUL"/>
    <property type="match status" value="1"/>
</dbReference>
<dbReference type="Pfam" id="PF13923">
    <property type="entry name" value="zf-C3HC4_2"/>
    <property type="match status" value="1"/>
</dbReference>
<dbReference type="SMART" id="SM00184">
    <property type="entry name" value="RING"/>
    <property type="match status" value="1"/>
</dbReference>
<dbReference type="SUPFAM" id="SSF57850">
    <property type="entry name" value="RING/U-box"/>
    <property type="match status" value="1"/>
</dbReference>
<dbReference type="PROSITE" id="PS00518">
    <property type="entry name" value="ZF_RING_1"/>
    <property type="match status" value="1"/>
</dbReference>
<dbReference type="PROSITE" id="PS50089">
    <property type="entry name" value="ZF_RING_2"/>
    <property type="match status" value="1"/>
</dbReference>
<gene>
    <name type="primary">rnf2</name>
    <name type="synonym">ring1b</name>
</gene>
<name>RING2_DANRE</name>
<accession>Q803I4</accession>
<accession>Q6PUR9</accession>
<accession>Q9PTH4</accession>
<comment type="function">
    <text evidence="1 2">E3 ubiquitin-protein ligase that mediates monoubiquitination of 'Lys-119' of histone H2A (H2AK119Ub), thereby playing a central role in histone code and gene regulation. H2AK119Ub gives a specific tag for epigenetic transcriptional repression. Essential component of a Polycomb group (PcG) multiprotein PRC1-like complex, a complex class required to maintain the transcriptionally repressive state of many genes, including Hox genes, throughout development. PcG PRC1 complex acts via chromatin remodeling and modification of histones, rendering chromatin heritably changed in its expressibility.</text>
</comment>
<comment type="catalytic activity">
    <reaction evidence="1">
        <text>S-ubiquitinyl-[E2 ubiquitin-conjugating enzyme]-L-cysteine + [acceptor protein]-L-lysine = [E2 ubiquitin-conjugating enzyme]-L-cysteine + N(6)-ubiquitinyl-[acceptor protein]-L-lysine.</text>
        <dbReference type="EC" id="2.3.2.27"/>
    </reaction>
</comment>
<comment type="pathway">
    <text evidence="1">Protein modification; protein ubiquitination.</text>
</comment>
<comment type="subunit">
    <text evidence="1 2">Component of chromatin-associated Polycomb (PcG) complexes. Component of a PRC1-like complex. Component of some MLL1/MLL complex (By similarity).</text>
</comment>
<comment type="subcellular location">
    <subcellularLocation>
        <location evidence="2">Nucleus</location>
    </subcellularLocation>
    <subcellularLocation>
        <location evidence="2">Cytoplasm</location>
    </subcellularLocation>
    <subcellularLocation>
        <location evidence="2">Chromosome</location>
    </subcellularLocation>
</comment>
<comment type="sequence caution" evidence="5">
    <conflict type="erroneous initiation">
        <sequence resource="EMBL-CDS" id="AAS92634"/>
    </conflict>
</comment>
<proteinExistence type="evidence at transcript level"/>
<organism>
    <name type="scientific">Danio rerio</name>
    <name type="common">Zebrafish</name>
    <name type="synonym">Brachydanio rerio</name>
    <dbReference type="NCBI Taxonomy" id="7955"/>
    <lineage>
        <taxon>Eukaryota</taxon>
        <taxon>Metazoa</taxon>
        <taxon>Chordata</taxon>
        <taxon>Craniata</taxon>
        <taxon>Vertebrata</taxon>
        <taxon>Euteleostomi</taxon>
        <taxon>Actinopterygii</taxon>
        <taxon>Neopterygii</taxon>
        <taxon>Teleostei</taxon>
        <taxon>Ostariophysi</taxon>
        <taxon>Cypriniformes</taxon>
        <taxon>Danionidae</taxon>
        <taxon>Danioninae</taxon>
        <taxon>Danio</taxon>
    </lineage>
</organism>
<feature type="chain" id="PRO_0000056041" description="E3 ubiquitin-protein ligase RING2">
    <location>
        <begin position="1"/>
        <end position="336"/>
    </location>
</feature>
<feature type="zinc finger region" description="RING-type" evidence="3">
    <location>
        <begin position="51"/>
        <end position="91"/>
    </location>
</feature>
<feature type="region of interest" description="Interaction with HIP2" evidence="1">
    <location>
        <begin position="2"/>
        <end position="179"/>
    </location>
</feature>
<feature type="region of interest" description="Interaction with nucleosomes via an acidic patch on histone H2A and histone H2B" evidence="1">
    <location>
        <begin position="93"/>
        <end position="98"/>
    </location>
</feature>
<feature type="region of interest" description="Disordered" evidence="4">
    <location>
        <begin position="158"/>
        <end position="218"/>
    </location>
</feature>
<feature type="compositionally biased region" description="Polar residues" evidence="4">
    <location>
        <begin position="176"/>
        <end position="190"/>
    </location>
</feature>
<feature type="sequence conflict" description="In Ref. 2; AAH44472." evidence="5" ref="2">
    <original>Y</original>
    <variation>C</variation>
    <location>
        <position position="291"/>
    </location>
</feature>
<feature type="sequence conflict" description="In Ref. 2; AAH44472." evidence="5" ref="2">
    <original>N</original>
    <variation>D</variation>
    <location>
        <position position="300"/>
    </location>
</feature>
<feature type="sequence conflict" description="In Ref. 2; AAH44472." evidence="5" ref="2">
    <original>Y</original>
    <variation>C</variation>
    <location>
        <position position="318"/>
    </location>
</feature>
<evidence type="ECO:0000250" key="1">
    <source>
        <dbReference type="UniProtKB" id="Q99496"/>
    </source>
</evidence>
<evidence type="ECO:0000250" key="2">
    <source>
        <dbReference type="UniProtKB" id="Q9CQJ4"/>
    </source>
</evidence>
<evidence type="ECO:0000255" key="3">
    <source>
        <dbReference type="PROSITE-ProRule" id="PRU00175"/>
    </source>
</evidence>
<evidence type="ECO:0000256" key="4">
    <source>
        <dbReference type="SAM" id="MobiDB-lite"/>
    </source>
</evidence>
<evidence type="ECO:0000305" key="5"/>
<protein>
    <recommendedName>
        <fullName>E3 ubiquitin-protein ligase RING2</fullName>
        <ecNumber evidence="1">2.3.2.27</ecNumber>
    </recommendedName>
    <alternativeName>
        <fullName>RING finger protein 1B</fullName>
        <shortName>RING1b</shortName>
    </alternativeName>
    <alternativeName>
        <fullName>RING finger protein 2</fullName>
    </alternativeName>
    <alternativeName>
        <fullName evidence="5">RING-type E3 ubiquitin transferase RING2</fullName>
    </alternativeName>
</protein>
<sequence>MTQTVQTNGVQPLSKTWELSLYELQRTPQEAITDGLEIAVSPRSLHSELMCPICLDMLKNTMTTKECLHRFCADCIITALRSGNKECPTCRKKLVSKRSLRPDPNFDALISKIYPSRDEYEAHQERVLARISKHNNQQALSHSIEEGLKIQAMNRLQRGKKHQIENGSGAEDNGDSSHCSNASVHSNQEAGPSIKRTKTSDDSGLDMDNATENGGGDIALDGVSEIELVFRPHPTLMEKEDAAQTRYIKTSGNATVDHLSKYLAVRLALEEMRKNGEASPINVEAASEKQYTIYIPTASNQFTVLNGSFSLELVSEKYWKVNKPMELYFAPTKEHK</sequence>
<keyword id="KW-0158">Chromosome</keyword>
<keyword id="KW-0963">Cytoplasm</keyword>
<keyword id="KW-0479">Metal-binding</keyword>
<keyword id="KW-0539">Nucleus</keyword>
<keyword id="KW-1185">Reference proteome</keyword>
<keyword id="KW-0678">Repressor</keyword>
<keyword id="KW-0804">Transcription</keyword>
<keyword id="KW-0805">Transcription regulation</keyword>
<keyword id="KW-0808">Transferase</keyword>
<keyword id="KW-0833">Ubl conjugation pathway</keyword>
<keyword id="KW-0862">Zinc</keyword>
<keyword id="KW-0863">Zinc-finger</keyword>